<organism>
    <name type="scientific">Dictyostelium discoideum</name>
    <name type="common">Social amoeba</name>
    <dbReference type="NCBI Taxonomy" id="44689"/>
    <lineage>
        <taxon>Eukaryota</taxon>
        <taxon>Amoebozoa</taxon>
        <taxon>Evosea</taxon>
        <taxon>Eumycetozoa</taxon>
        <taxon>Dictyostelia</taxon>
        <taxon>Dictyosteliales</taxon>
        <taxon>Dictyosteliaceae</taxon>
        <taxon>Dictyostelium</taxon>
    </lineage>
</organism>
<name>SMC6_DICDI</name>
<gene>
    <name type="primary">smc6</name>
    <name type="ORF">DDB_G0288993</name>
</gene>
<keyword id="KW-0067">ATP-binding</keyword>
<keyword id="KW-0158">Chromosome</keyword>
<keyword id="KW-0175">Coiled coil</keyword>
<keyword id="KW-0227">DNA damage</keyword>
<keyword id="KW-0233">DNA recombination</keyword>
<keyword id="KW-0234">DNA repair</keyword>
<keyword id="KW-0547">Nucleotide-binding</keyword>
<keyword id="KW-0539">Nucleus</keyword>
<keyword id="KW-1185">Reference proteome</keyword>
<sequence>MSKRKLGHDGNSHELDEEEEEEEEDDDDELIHSTQDQDRPHKQQRVENGKQMTPTKQHQQQQQQQPISNGRLKKLKAQSSDEESGSSEDDDEDVEDVDSSGSDSGSSDDDDDDDDDDDDDDGNSEDEREAVRREQQLKSGVTEPEAGIIESITLENFMCHRHFKLDFCSNVNFIAGENGSGKSAVLIALIVCLGAKAGFTNRGSKLSDLVKAETNTAVITVKLRNQGQEAFKPEKYGKSVIIERRISRTGSSGYKVKDYNGKTVSDKFNDVSLILEQFNIQIDNPMSILTQDTSRQFLNSAGPQDKYKSFLMATQLDKMTKDYTTIREHIDKIKDMLSQKVVVIQELEKKVREYNKEYKDLQQMVGLERKISEFKNQLAWSFVVESEREAKRKEKQVAEAEERSFDNDIRKVDETIETYNKSIEDIKKDIKEFTDQIKIQEQKKETNNREILTIEREEAKIQTQIEANNKKRQQRKQRRHLQLQSINEIKERNAQLANNQSKLDEIKKKGQQKLQLEARKEELIKEKEDLMRDRENLKRDHQNQRTITQQMNREYEGLRVQLNNLRSTQKGENQAYGKGMTDFLHKIEASRRNFSKLPIGPIGLSLKIKNESWAFAIESAISKATLRNFLVFSIPDGITLQKLGHQFGIKVDYTKIPETTEVYKTVEHDELDPSLATVLRVLDSPSHFIINFLIDTKKVEQIGLGNDRKEIDSVLYTDRCPRGLSQFFDPQGNNYSKTKSGNPFYQAAKNSGEATMLRVNSDAAIQRTQRDMESKLPALNQQKKIEQELSSDVQAIEHKISQNDQDQNQCSRKILQITNEIKSIEDTLVQQTDDYSELEIGLASLDEEIKSMDEEINIQKAQRTEVAAQKGPFAENNRALDDQIDVLSNQLGNIENNLRKFNEGLRKLNNNKQALLQQQGRSAQERDQFKAEYQRILEIVKEKTDKATQICERIEIPTNETNTTLTNKIIQYTKQLEKESRGKRSRTEALKLFQDANNSLKEISEQRDNIEELATILERNLNERYKKWQRFRLSISRRSDQYFNIFLSKKGYTGSLTFDHQNGKLDINVELQKALPSNQNGTAKGDTKGLSGGERSFSTVSLLLAFWENMECPFRAMDEFDVFMDEVNRSISINLLMSKAEENRSKQYIFVTPLALNHIKTSEYVKVFRVRAPVRTGGDVTVETD</sequence>
<protein>
    <recommendedName>
        <fullName>Structural maintenance of chromosomes protein 6</fullName>
        <shortName>SMC protein 6</shortName>
        <shortName>SMC-6</shortName>
    </recommendedName>
</protein>
<dbReference type="EMBL" id="AAFI02000129">
    <property type="protein sequence ID" value="EAL62951.1"/>
    <property type="molecule type" value="Genomic_DNA"/>
</dbReference>
<dbReference type="RefSeq" id="XP_636454.1">
    <property type="nucleotide sequence ID" value="XM_631362.1"/>
</dbReference>
<dbReference type="SMR" id="Q54I56"/>
<dbReference type="FunCoup" id="Q54I56">
    <property type="interactions" value="634"/>
</dbReference>
<dbReference type="STRING" id="44689.Q54I56"/>
<dbReference type="PaxDb" id="44689-DDB0231143"/>
<dbReference type="EnsemblProtists" id="EAL62951">
    <property type="protein sequence ID" value="EAL62951"/>
    <property type="gene ID" value="DDB_G0288993"/>
</dbReference>
<dbReference type="GeneID" id="8626906"/>
<dbReference type="KEGG" id="ddi:DDB_G0288993"/>
<dbReference type="dictyBase" id="DDB_G0288993">
    <property type="gene designation" value="smc6"/>
</dbReference>
<dbReference type="VEuPathDB" id="AmoebaDB:DDB_G0288993"/>
<dbReference type="eggNOG" id="KOG0250">
    <property type="taxonomic scope" value="Eukaryota"/>
</dbReference>
<dbReference type="HOGENOM" id="CLU_009063_0_0_1"/>
<dbReference type="InParanoid" id="Q54I56"/>
<dbReference type="OMA" id="MCHDHFY"/>
<dbReference type="PhylomeDB" id="Q54I56"/>
<dbReference type="Reactome" id="R-DDI-3108214">
    <property type="pathway name" value="SUMOylation of DNA damage response and repair proteins"/>
</dbReference>
<dbReference type="PRO" id="PR:Q54I56"/>
<dbReference type="Proteomes" id="UP000002195">
    <property type="component" value="Chromosome 5"/>
</dbReference>
<dbReference type="GO" id="GO:0005634">
    <property type="term" value="C:nucleus"/>
    <property type="evidence" value="ECO:0000250"/>
    <property type="project" value="dictyBase"/>
</dbReference>
<dbReference type="GO" id="GO:0035861">
    <property type="term" value="C:site of double-strand break"/>
    <property type="evidence" value="ECO:0000318"/>
    <property type="project" value="GO_Central"/>
</dbReference>
<dbReference type="GO" id="GO:0030915">
    <property type="term" value="C:Smc5-Smc6 complex"/>
    <property type="evidence" value="ECO:0000250"/>
    <property type="project" value="dictyBase"/>
</dbReference>
<dbReference type="GO" id="GO:0005524">
    <property type="term" value="F:ATP binding"/>
    <property type="evidence" value="ECO:0007669"/>
    <property type="project" value="UniProtKB-KW"/>
</dbReference>
<dbReference type="GO" id="GO:0003684">
    <property type="term" value="F:damaged DNA binding"/>
    <property type="evidence" value="ECO:0000318"/>
    <property type="project" value="GO_Central"/>
</dbReference>
<dbReference type="GO" id="GO:0003697">
    <property type="term" value="F:single-stranded DNA binding"/>
    <property type="evidence" value="ECO:0000318"/>
    <property type="project" value="GO_Central"/>
</dbReference>
<dbReference type="GO" id="GO:0006281">
    <property type="term" value="P:DNA repair"/>
    <property type="evidence" value="ECO:0000250"/>
    <property type="project" value="dictyBase"/>
</dbReference>
<dbReference type="GO" id="GO:0000724">
    <property type="term" value="P:double-strand break repair via homologous recombination"/>
    <property type="evidence" value="ECO:0000318"/>
    <property type="project" value="GO_Central"/>
</dbReference>
<dbReference type="FunFam" id="3.40.50.300:FF:003232">
    <property type="entry name" value="Structural maintenance of chromosomes 6, gene 1"/>
    <property type="match status" value="1"/>
</dbReference>
<dbReference type="FunFam" id="3.40.50.300:FF:000959">
    <property type="entry name" value="structural maintenance of chromosomes protein 6"/>
    <property type="match status" value="1"/>
</dbReference>
<dbReference type="Gene3D" id="3.40.50.300">
    <property type="entry name" value="P-loop containing nucleotide triphosphate hydrolases"/>
    <property type="match status" value="2"/>
</dbReference>
<dbReference type="InterPro" id="IPR027417">
    <property type="entry name" value="P-loop_NTPase"/>
</dbReference>
<dbReference type="InterPro" id="IPR003395">
    <property type="entry name" value="RecF/RecN/SMC_N"/>
</dbReference>
<dbReference type="PANTHER" id="PTHR19306">
    <property type="entry name" value="STRUCTURAL MAINTENANCE OF CHROMOSOMES 5,6 SMC5, SMC6"/>
    <property type="match status" value="1"/>
</dbReference>
<dbReference type="PANTHER" id="PTHR19306:SF6">
    <property type="entry name" value="STRUCTURAL MAINTENANCE OF CHROMOSOMES PROTEIN 6"/>
    <property type="match status" value="1"/>
</dbReference>
<dbReference type="Pfam" id="PF02463">
    <property type="entry name" value="SMC_N"/>
    <property type="match status" value="1"/>
</dbReference>
<dbReference type="SUPFAM" id="SSF52540">
    <property type="entry name" value="P-loop containing nucleoside triphosphate hydrolases"/>
    <property type="match status" value="2"/>
</dbReference>
<accession>Q54I56</accession>
<comment type="function">
    <text evidence="1">Core component of the smc5-smc6 complex, a complex involved in DNA double-strand breaks by homologous recombination. The complex may promote sister chromatid homologous recombination by recruiting the smc1-smc3 cohesin complex to double-strand breaks (By similarity).</text>
</comment>
<comment type="subunit">
    <text evidence="1">Forms a heterodimer with smc5.</text>
</comment>
<comment type="subcellular location">
    <subcellularLocation>
        <location evidence="1">Nucleus</location>
    </subcellularLocation>
    <subcellularLocation>
        <location evidence="1">Chromosome</location>
    </subcellularLocation>
    <text evidence="1">Associates with chromatin.</text>
</comment>
<comment type="domain">
    <text evidence="1">The flexible hinge domain, which separates the large intramolecular coiled coil regions, allows the heterotypic interaction with the corresponding domain of smc5, forming a V-shaped heterodimer.</text>
</comment>
<comment type="similarity">
    <text evidence="4">Belongs to the SMC family. SMC6 subfamily.</text>
</comment>
<reference key="1">
    <citation type="journal article" date="2005" name="Nature">
        <title>The genome of the social amoeba Dictyostelium discoideum.</title>
        <authorList>
            <person name="Eichinger L."/>
            <person name="Pachebat J.A."/>
            <person name="Gloeckner G."/>
            <person name="Rajandream M.A."/>
            <person name="Sucgang R."/>
            <person name="Berriman M."/>
            <person name="Song J."/>
            <person name="Olsen R."/>
            <person name="Szafranski K."/>
            <person name="Xu Q."/>
            <person name="Tunggal B."/>
            <person name="Kummerfeld S."/>
            <person name="Madera M."/>
            <person name="Konfortov B.A."/>
            <person name="Rivero F."/>
            <person name="Bankier A.T."/>
            <person name="Lehmann R."/>
            <person name="Hamlin N."/>
            <person name="Davies R."/>
            <person name="Gaudet P."/>
            <person name="Fey P."/>
            <person name="Pilcher K."/>
            <person name="Chen G."/>
            <person name="Saunders D."/>
            <person name="Sodergren E.J."/>
            <person name="Davis P."/>
            <person name="Kerhornou A."/>
            <person name="Nie X."/>
            <person name="Hall N."/>
            <person name="Anjard C."/>
            <person name="Hemphill L."/>
            <person name="Bason N."/>
            <person name="Farbrother P."/>
            <person name="Desany B."/>
            <person name="Just E."/>
            <person name="Morio T."/>
            <person name="Rost R."/>
            <person name="Churcher C.M."/>
            <person name="Cooper J."/>
            <person name="Haydock S."/>
            <person name="van Driessche N."/>
            <person name="Cronin A."/>
            <person name="Goodhead I."/>
            <person name="Muzny D.M."/>
            <person name="Mourier T."/>
            <person name="Pain A."/>
            <person name="Lu M."/>
            <person name="Harper D."/>
            <person name="Lindsay R."/>
            <person name="Hauser H."/>
            <person name="James K.D."/>
            <person name="Quiles M."/>
            <person name="Madan Babu M."/>
            <person name="Saito T."/>
            <person name="Buchrieser C."/>
            <person name="Wardroper A."/>
            <person name="Felder M."/>
            <person name="Thangavelu M."/>
            <person name="Johnson D."/>
            <person name="Knights A."/>
            <person name="Loulseged H."/>
            <person name="Mungall K.L."/>
            <person name="Oliver K."/>
            <person name="Price C."/>
            <person name="Quail M.A."/>
            <person name="Urushihara H."/>
            <person name="Hernandez J."/>
            <person name="Rabbinowitsch E."/>
            <person name="Steffen D."/>
            <person name="Sanders M."/>
            <person name="Ma J."/>
            <person name="Kohara Y."/>
            <person name="Sharp S."/>
            <person name="Simmonds M.N."/>
            <person name="Spiegler S."/>
            <person name="Tivey A."/>
            <person name="Sugano S."/>
            <person name="White B."/>
            <person name="Walker D."/>
            <person name="Woodward J.R."/>
            <person name="Winckler T."/>
            <person name="Tanaka Y."/>
            <person name="Shaulsky G."/>
            <person name="Schleicher M."/>
            <person name="Weinstock G.M."/>
            <person name="Rosenthal A."/>
            <person name="Cox E.C."/>
            <person name="Chisholm R.L."/>
            <person name="Gibbs R.A."/>
            <person name="Loomis W.F."/>
            <person name="Platzer M."/>
            <person name="Kay R.R."/>
            <person name="Williams J.G."/>
            <person name="Dear P.H."/>
            <person name="Noegel A.A."/>
            <person name="Barrell B.G."/>
            <person name="Kuspa A."/>
        </authorList>
    </citation>
    <scope>NUCLEOTIDE SEQUENCE [LARGE SCALE GENOMIC DNA]</scope>
    <source>
        <strain>AX4</strain>
    </source>
</reference>
<proteinExistence type="inferred from homology"/>
<evidence type="ECO:0000250" key="1"/>
<evidence type="ECO:0000255" key="2"/>
<evidence type="ECO:0000256" key="3">
    <source>
        <dbReference type="SAM" id="MobiDB-lite"/>
    </source>
</evidence>
<evidence type="ECO:0000305" key="4"/>
<feature type="chain" id="PRO_0000327930" description="Structural maintenance of chromosomes protein 6">
    <location>
        <begin position="1"/>
        <end position="1185"/>
    </location>
</feature>
<feature type="region of interest" description="Disordered" evidence="3">
    <location>
        <begin position="1"/>
        <end position="144"/>
    </location>
</feature>
<feature type="region of interest" description="Flexible hinge">
    <location>
        <begin position="571"/>
        <end position="807"/>
    </location>
</feature>
<feature type="coiled-coil region" evidence="2">
    <location>
        <begin position="337"/>
        <end position="570"/>
    </location>
</feature>
<feature type="coiled-coil region" evidence="2">
    <location>
        <begin position="808"/>
        <end position="1024"/>
    </location>
</feature>
<feature type="compositionally biased region" description="Acidic residues" evidence="3">
    <location>
        <begin position="15"/>
        <end position="29"/>
    </location>
</feature>
<feature type="compositionally biased region" description="Basic and acidic residues" evidence="3">
    <location>
        <begin position="35"/>
        <end position="48"/>
    </location>
</feature>
<feature type="compositionally biased region" description="Acidic residues" evidence="3">
    <location>
        <begin position="80"/>
        <end position="98"/>
    </location>
</feature>
<feature type="compositionally biased region" description="Acidic residues" evidence="3">
    <location>
        <begin position="106"/>
        <end position="128"/>
    </location>
</feature>
<feature type="binding site" evidence="2">
    <location>
        <begin position="176"/>
        <end position="183"/>
    </location>
    <ligand>
        <name>ATP</name>
        <dbReference type="ChEBI" id="CHEBI:30616"/>
    </ligand>
</feature>